<comment type="function">
    <text evidence="1">Transaldolase is important for the balance of metabolites in the pentose-phosphate pathway.</text>
</comment>
<comment type="catalytic activity">
    <reaction evidence="1">
        <text>D-sedoheptulose 7-phosphate + D-glyceraldehyde 3-phosphate = D-erythrose 4-phosphate + beta-D-fructose 6-phosphate</text>
        <dbReference type="Rhea" id="RHEA:17053"/>
        <dbReference type="ChEBI" id="CHEBI:16897"/>
        <dbReference type="ChEBI" id="CHEBI:57483"/>
        <dbReference type="ChEBI" id="CHEBI:57634"/>
        <dbReference type="ChEBI" id="CHEBI:59776"/>
        <dbReference type="EC" id="2.2.1.2"/>
    </reaction>
</comment>
<comment type="pathway">
    <text evidence="1">Carbohydrate degradation; pentose phosphate pathway; D-glyceraldehyde 3-phosphate and beta-D-fructose 6-phosphate from D-ribose 5-phosphate and D-xylulose 5-phosphate (non-oxidative stage): step 2/3.</text>
</comment>
<comment type="subcellular location">
    <subcellularLocation>
        <location evidence="1">Cytoplasm</location>
    </subcellularLocation>
</comment>
<comment type="similarity">
    <text evidence="1">Belongs to the transaldolase family. Type 3B subfamily.</text>
</comment>
<name>TAL_CLOPE</name>
<proteinExistence type="inferred from homology"/>
<accession>Q8XMJ6</accession>
<gene>
    <name evidence="1" type="primary">tal</name>
    <name type="ordered locus">CPE0692</name>
</gene>
<protein>
    <recommendedName>
        <fullName evidence="1">Probable transaldolase</fullName>
        <ecNumber evidence="1">2.2.1.2</ecNumber>
    </recommendedName>
</protein>
<reference key="1">
    <citation type="journal article" date="2002" name="Proc. Natl. Acad. Sci. U.S.A.">
        <title>Complete genome sequence of Clostridium perfringens, an anaerobic flesh-eater.</title>
        <authorList>
            <person name="Shimizu T."/>
            <person name="Ohtani K."/>
            <person name="Hirakawa H."/>
            <person name="Ohshima K."/>
            <person name="Yamashita A."/>
            <person name="Shiba T."/>
            <person name="Ogasawara N."/>
            <person name="Hattori M."/>
            <person name="Kuhara S."/>
            <person name="Hayashi H."/>
        </authorList>
    </citation>
    <scope>NUCLEOTIDE SEQUENCE [LARGE SCALE GENOMIC DNA]</scope>
    <source>
        <strain>13 / Type A</strain>
    </source>
</reference>
<organism>
    <name type="scientific">Clostridium perfringens (strain 13 / Type A)</name>
    <dbReference type="NCBI Taxonomy" id="195102"/>
    <lineage>
        <taxon>Bacteria</taxon>
        <taxon>Bacillati</taxon>
        <taxon>Bacillota</taxon>
        <taxon>Clostridia</taxon>
        <taxon>Eubacteriales</taxon>
        <taxon>Clostridiaceae</taxon>
        <taxon>Clostridium</taxon>
    </lineage>
</organism>
<keyword id="KW-0963">Cytoplasm</keyword>
<keyword id="KW-0570">Pentose shunt</keyword>
<keyword id="KW-1185">Reference proteome</keyword>
<keyword id="KW-0704">Schiff base</keyword>
<keyword id="KW-0808">Transferase</keyword>
<dbReference type="EC" id="2.2.1.2" evidence="1"/>
<dbReference type="EMBL" id="BA000016">
    <property type="protein sequence ID" value="BAB80398.1"/>
    <property type="molecule type" value="Genomic_DNA"/>
</dbReference>
<dbReference type="SMR" id="Q8XMJ6"/>
<dbReference type="STRING" id="195102.gene:10489954"/>
<dbReference type="KEGG" id="cpe:CPE0692"/>
<dbReference type="HOGENOM" id="CLU_079764_0_0_9"/>
<dbReference type="UniPathway" id="UPA00115">
    <property type="reaction ID" value="UER00414"/>
</dbReference>
<dbReference type="Proteomes" id="UP000000818">
    <property type="component" value="Chromosome"/>
</dbReference>
<dbReference type="GO" id="GO:0005737">
    <property type="term" value="C:cytoplasm"/>
    <property type="evidence" value="ECO:0007669"/>
    <property type="project" value="UniProtKB-SubCell"/>
</dbReference>
<dbReference type="GO" id="GO:0016832">
    <property type="term" value="F:aldehyde-lyase activity"/>
    <property type="evidence" value="ECO:0007669"/>
    <property type="project" value="InterPro"/>
</dbReference>
<dbReference type="GO" id="GO:0004801">
    <property type="term" value="F:transaldolase activity"/>
    <property type="evidence" value="ECO:0007669"/>
    <property type="project" value="UniProtKB-UniRule"/>
</dbReference>
<dbReference type="GO" id="GO:0005975">
    <property type="term" value="P:carbohydrate metabolic process"/>
    <property type="evidence" value="ECO:0007669"/>
    <property type="project" value="InterPro"/>
</dbReference>
<dbReference type="GO" id="GO:0006098">
    <property type="term" value="P:pentose-phosphate shunt"/>
    <property type="evidence" value="ECO:0007669"/>
    <property type="project" value="UniProtKB-UniRule"/>
</dbReference>
<dbReference type="CDD" id="cd00956">
    <property type="entry name" value="Transaldolase_FSA"/>
    <property type="match status" value="1"/>
</dbReference>
<dbReference type="FunFam" id="3.20.20.70:FF:000018">
    <property type="entry name" value="Probable transaldolase"/>
    <property type="match status" value="1"/>
</dbReference>
<dbReference type="Gene3D" id="3.20.20.70">
    <property type="entry name" value="Aldolase class I"/>
    <property type="match status" value="1"/>
</dbReference>
<dbReference type="HAMAP" id="MF_00494">
    <property type="entry name" value="Transaldolase_3b"/>
    <property type="match status" value="1"/>
</dbReference>
<dbReference type="InterPro" id="IPR013785">
    <property type="entry name" value="Aldolase_TIM"/>
</dbReference>
<dbReference type="InterPro" id="IPR001585">
    <property type="entry name" value="TAL/FSA"/>
</dbReference>
<dbReference type="InterPro" id="IPR022999">
    <property type="entry name" value="Transaldolase_3B"/>
</dbReference>
<dbReference type="InterPro" id="IPR004731">
    <property type="entry name" value="Transaldolase_3B/F6P_aldolase"/>
</dbReference>
<dbReference type="InterPro" id="IPR018225">
    <property type="entry name" value="Transaldolase_AS"/>
</dbReference>
<dbReference type="InterPro" id="IPR033919">
    <property type="entry name" value="TSA/FSA_arc/bac"/>
</dbReference>
<dbReference type="NCBIfam" id="TIGR00875">
    <property type="entry name" value="fsa_talC_mipB"/>
    <property type="match status" value="1"/>
</dbReference>
<dbReference type="PANTHER" id="PTHR10683">
    <property type="entry name" value="TRANSALDOLASE"/>
    <property type="match status" value="1"/>
</dbReference>
<dbReference type="PANTHER" id="PTHR10683:SF36">
    <property type="entry name" value="TRANSALDOLASE"/>
    <property type="match status" value="1"/>
</dbReference>
<dbReference type="Pfam" id="PF00923">
    <property type="entry name" value="TAL_FSA"/>
    <property type="match status" value="1"/>
</dbReference>
<dbReference type="SUPFAM" id="SSF51569">
    <property type="entry name" value="Aldolase"/>
    <property type="match status" value="1"/>
</dbReference>
<dbReference type="PROSITE" id="PS01054">
    <property type="entry name" value="TRANSALDOLASE_1"/>
    <property type="match status" value="1"/>
</dbReference>
<dbReference type="PROSITE" id="PS00958">
    <property type="entry name" value="TRANSALDOLASE_2"/>
    <property type="match status" value="1"/>
</dbReference>
<sequence length="215" mass="23351">MKIFIDTANVEEIRKASKLGVLAGVTTNPSLIAKEGRDIKEVIEEICSIVDGPISAEVMALECDEMVREGRELAKIHKNIVIKIPMCEEGLKAVKVLASEGIRTNVTLIFSPLQALLAARAGASFVSPFLGRLDDIGNPGIEIVTQIAEMFALHGIDTEIISASVRNPMHVLDSAMAGSHIATIPYNVILQMVKHPLTDAGMKKFIEDYNKAFNK</sequence>
<evidence type="ECO:0000255" key="1">
    <source>
        <dbReference type="HAMAP-Rule" id="MF_00494"/>
    </source>
</evidence>
<feature type="chain" id="PRO_0000173665" description="Probable transaldolase">
    <location>
        <begin position="1"/>
        <end position="215"/>
    </location>
</feature>
<feature type="active site" description="Schiff-base intermediate with substrate" evidence="1">
    <location>
        <position position="83"/>
    </location>
</feature>